<accession>P11261</accession>
<accession>Q85515</accession>
<accession>Q85516</accession>
<accession>Q85517</accession>
<evidence type="ECO:0000250" key="1"/>
<evidence type="ECO:0000255" key="2"/>
<evidence type="ECO:0000256" key="3">
    <source>
        <dbReference type="SAM" id="MobiDB-lite"/>
    </source>
</evidence>
<evidence type="ECO:0007829" key="4">
    <source>
        <dbReference type="PDB" id="1LCS"/>
    </source>
</evidence>
<organismHost>
    <name type="scientific">Felis catus</name>
    <name type="common">Cat</name>
    <name type="synonym">Felis silvestris catus</name>
    <dbReference type="NCBI Taxonomy" id="9685"/>
</organismHost>
<sequence length="662" mass="73132">MEGPTHPKPSKDKTFSWDLMILVGVLLRLDVGMANPSPHQIYNVTWTITNLVTGTKANATSMLGTLTDAFPTMYFDLCDIIGNTWNPSDQEPFPGYGCDQPMRRWQQRNTPFYVCPGHANRKQCGGPQDGFCAVWGCETTGETYWRPTSSWDYITVKKGVTQGIYQCSGGGWCGPCYDKAVHSSITGASEGGRCNPLILQFTQKGRQTSWDGPKSWGLRLYRSGYDPIALFSVSRQVMTITLPQAMGPNLVLPDQKPPSRQSQIESRVTPHHSQGNGGTPGITLVNASIAPLSTPVTPASPKRIGTGNRLINLVQGTYLALNVTNPNKTKDCWLCLVSRPPYYEGIAVLGNYSNQTNPPPSCLSDPQHKLTISEVSGQGSCIGTVPKTHQALCKKTQKGHKGTHYLAAPSGTYWACNTGLTPCISMAVLNWTSDFCVLIELWPRVTYHQPEYVYTHFDKTVRLRREPISLTVALMLGGLTVGGIAAGVGTGTKALLETAQFGQLQMAMHTDIQALEESISALEKSLTSLSEVVLQNRRGLDILFLQEGGLCAALKEECCFYADHTGLVRDNMAKLRERLKQRQQLFDSQQGWFEGWFNKSPWFTTLISSIMGPLLILLLILLFGPCILNRLVQFVKDRISVVQALILTQQYQQIKQYDPDQP</sequence>
<gene>
    <name type="primary">env</name>
</gene>
<comment type="function">
    <text evidence="1">The surface protein (SU) attaches the virus to the host cell by binding to its receptor. This interaction triggers the refolding of the transmembrane protein (TM) and is thought to activate its fusogenic potential by unmasking its fusion peptide. Fusion occurs at the host cell plasma membrane (By similarity).</text>
</comment>
<comment type="function">
    <text evidence="1">The transmembrane protein (TM) acts as a class I viral fusion protein. Under the current model, the protein has at least 3 conformational states: pre-fusion native state, pre-hairpin intermediate state, and post-fusion hairpin state. During viral and target cell membrane fusion, the coiled coil regions (heptad repeats) assume a trimer-of-hairpins structure, positioning the fusion peptide in close proximity to the C-terminal region of the ectodomain. The formation of this structure appears to drive apposition and subsequent fusion of viral and target cell membranes. Membranes fusion leads to delivery of the nucleocapsid into the cytoplasm (By similarity).</text>
</comment>
<comment type="subunit">
    <text evidence="1">The mature envelope protein (Env) consists of a trimer of SU-TM heterodimers attached by a labile interchain disulfide bond.</text>
</comment>
<comment type="subcellular location">
    <molecule>Transmembrane protein</molecule>
    <subcellularLocation>
        <location evidence="1">Virion membrane</location>
        <topology evidence="1">Single-pass type I membrane protein</topology>
    </subcellularLocation>
    <subcellularLocation>
        <location evidence="1">Host cell membrane</location>
        <topology evidence="1">Single-pass type I membrane protein</topology>
    </subcellularLocation>
</comment>
<comment type="subcellular location">
    <molecule>Surface protein</molecule>
    <subcellularLocation>
        <location>Virion membrane</location>
        <topology>Peripheral membrane protein</topology>
    </subcellularLocation>
    <subcellularLocation>
        <location evidence="1">Host cell membrane</location>
        <topology evidence="1">Peripheral membrane protein</topology>
    </subcellularLocation>
    <text evidence="1">The surface protein is not anchored to the viral envelope, but associates with the extravirion surface through its binding to TM. Both proteins are thought to be concentrated at the site of budding and incorporated into the virions possibly by contacts between the cytoplasmic tail of Env and the N-terminus of Gag (By similarity).</text>
</comment>
<comment type="subcellular location">
    <molecule>R-peptide</molecule>
    <subcellularLocation>
        <location evidence="1">Host cell membrane</location>
        <topology evidence="1">Peripheral membrane protein</topology>
    </subcellularLocation>
    <text evidence="1">The R-peptide is membrane-associated through its palmitate.</text>
</comment>
<comment type="domain">
    <text evidence="1">The 17 amino acids long immunosuppressive region is present in many retroviral envelope proteins. Synthetic peptides derived from this relatively conserved sequence inhibit immune function in vitro and in vivo (By similarity).</text>
</comment>
<comment type="PTM">
    <text evidence="1">Specific enzymatic cleavages in vivo yield mature proteins. Envelope glycoproteins are synthesized as an inactive precursor that is N-glycosylated and processed likely by host cell furin or by a furin-like protease in the Golgi to yield the mature SU and TM proteins. The cleavage site between SU and TM requires the minimal sequence [KR]-X-[KR]-R. The R-peptide is released from the C-terminus of the cytoplasmic tail of the TM protein upon particle formation as a result of proteolytic cleavage by the viral protease. Cleavage of this peptide is required for TM to become fusogenic (By similarity).</text>
</comment>
<comment type="PTM">
    <text evidence="1">The CXXC motif is highly conserved across a broad range of retroviral envelope proteins. It is thought to participate in the formation of a labile disulfide bond possibly with the CX6CC motif present in the transmembrane protein. Isomerization of the intersubunit disulfide bond to an SU intrachain disulfide bond is thought to occur upon receptor recognition in order to allow membrane fusion (By similarity).</text>
</comment>
<comment type="PTM">
    <text evidence="1">The transmembrane protein is palmitoylated.</text>
</comment>
<comment type="PTM">
    <text evidence="1">The R-peptide is palmitoylated.</text>
</comment>
<name>ENV_FLVLB</name>
<feature type="signal peptide" evidence="2">
    <location>
        <begin position="1"/>
        <end position="34"/>
    </location>
</feature>
<feature type="chain" id="PRO_0000239566" description="Envelope glycoprotein">
    <location>
        <begin position="35"/>
        <end position="662"/>
    </location>
</feature>
<feature type="chain" id="PRO_0000040714" description="Surface protein" evidence="1">
    <location>
        <begin position="35"/>
        <end position="465"/>
    </location>
</feature>
<feature type="chain" id="PRO_0000040715" description="Transmembrane protein" evidence="1">
    <location>
        <begin position="466"/>
        <end position="645"/>
    </location>
</feature>
<feature type="peptide" id="PRO_0000239567" description="R-peptide" evidence="1">
    <location>
        <begin position="646"/>
        <end position="662"/>
    </location>
</feature>
<feature type="topological domain" description="Extracellular" evidence="2">
    <location>
        <begin position="35"/>
        <end position="606"/>
    </location>
</feature>
<feature type="transmembrane region" description="Helical" evidence="2">
    <location>
        <begin position="607"/>
        <end position="627"/>
    </location>
</feature>
<feature type="topological domain" description="Cytoplasmic" evidence="2">
    <location>
        <begin position="628"/>
        <end position="662"/>
    </location>
</feature>
<feature type="region of interest" description="Disordered" evidence="3">
    <location>
        <begin position="251"/>
        <end position="281"/>
    </location>
</feature>
<feature type="region of interest" description="Fusion peptide" evidence="2">
    <location>
        <begin position="468"/>
        <end position="488"/>
    </location>
</feature>
<feature type="region of interest" description="Immunosuppression" evidence="1">
    <location>
        <begin position="534"/>
        <end position="550"/>
    </location>
</feature>
<feature type="coiled-coil region" evidence="2">
    <location>
        <begin position="496"/>
        <end position="545"/>
    </location>
</feature>
<feature type="coiled-coil region" evidence="2">
    <location>
        <begin position="555"/>
        <end position="591"/>
    </location>
</feature>
<feature type="short sequence motif" description="CXXC">
    <location>
        <begin position="332"/>
        <end position="335"/>
    </location>
</feature>
<feature type="short sequence motif" description="CX6CC">
    <location>
        <begin position="551"/>
        <end position="559"/>
    </location>
</feature>
<feature type="compositionally biased region" description="Polar residues" evidence="3">
    <location>
        <begin position="258"/>
        <end position="274"/>
    </location>
</feature>
<feature type="site" description="Cleavage; by host" evidence="1">
    <location>
        <begin position="465"/>
        <end position="466"/>
    </location>
</feature>
<feature type="site" description="Cleavage; by viral protease" evidence="1">
    <location>
        <begin position="645"/>
        <end position="646"/>
    </location>
</feature>
<feature type="lipid moiety-binding region" description="S-palmitoyl cysteine; by host" evidence="1">
    <location>
        <position position="626"/>
    </location>
</feature>
<feature type="glycosylation site" description="N-linked (GlcNAc...) asparagine; by host" evidence="2">
    <location>
        <position position="43"/>
    </location>
</feature>
<feature type="glycosylation site" description="N-linked (GlcNAc...) asparagine; by host" evidence="2">
    <location>
        <position position="58"/>
    </location>
</feature>
<feature type="glycosylation site" description="N-linked (GlcNAc...) asparagine; by host" evidence="2">
    <location>
        <position position="286"/>
    </location>
</feature>
<feature type="glycosylation site" description="N-linked (GlcNAc...) asparagine; by host" evidence="2">
    <location>
        <position position="322"/>
    </location>
</feature>
<feature type="glycosylation site" description="N-linked (GlcNAc...) asparagine; by host" evidence="2">
    <location>
        <position position="327"/>
    </location>
</feature>
<feature type="glycosylation site" description="N-linked (GlcNAc...) asparagine; by host" evidence="2">
    <location>
        <position position="351"/>
    </location>
</feature>
<feature type="glycosylation site" description="N-linked (GlcNAc...) asparagine; by host" evidence="2">
    <location>
        <position position="354"/>
    </location>
</feature>
<feature type="glycosylation site" description="N-linked (GlcNAc...) asparagine; by host" evidence="2">
    <location>
        <position position="430"/>
    </location>
</feature>
<feature type="disulfide bond" evidence="1">
    <location>
        <begin position="115"/>
        <end position="132"/>
    </location>
</feature>
<feature type="disulfide bond" evidence="1">
    <location>
        <begin position="124"/>
        <end position="137"/>
    </location>
</feature>
<feature type="disulfide bond" description="Interchain (between SU and TM chains, or C-335 with C-559); in linked form" evidence="1">
    <location>
        <begin position="332"/>
        <end position="559"/>
    </location>
</feature>
<feature type="disulfide bond" evidence="1">
    <location>
        <begin position="332"/>
        <end position="335"/>
    </location>
</feature>
<feature type="disulfide bond" evidence="1">
    <location>
        <begin position="551"/>
        <end position="558"/>
    </location>
</feature>
<feature type="strand" evidence="4">
    <location>
        <begin position="42"/>
        <end position="50"/>
    </location>
</feature>
<feature type="turn" evidence="4">
    <location>
        <begin position="51"/>
        <end position="53"/>
    </location>
</feature>
<feature type="strand" evidence="4">
    <location>
        <begin position="56"/>
        <end position="64"/>
    </location>
</feature>
<feature type="turn" evidence="4">
    <location>
        <begin position="66"/>
        <end position="68"/>
    </location>
</feature>
<feature type="strand" evidence="4">
    <location>
        <begin position="73"/>
        <end position="76"/>
    </location>
</feature>
<feature type="helix" evidence="4">
    <location>
        <begin position="77"/>
        <end position="79"/>
    </location>
</feature>
<feature type="strand" evidence="4">
    <location>
        <begin position="98"/>
        <end position="100"/>
    </location>
</feature>
<feature type="helix" evidence="4">
    <location>
        <begin position="101"/>
        <end position="108"/>
    </location>
</feature>
<feature type="strand" evidence="4">
    <location>
        <begin position="112"/>
        <end position="119"/>
    </location>
</feature>
<feature type="helix" evidence="4">
    <location>
        <begin position="122"/>
        <end position="124"/>
    </location>
</feature>
<feature type="helix" evidence="4">
    <location>
        <begin position="127"/>
        <end position="129"/>
    </location>
</feature>
<feature type="strand" evidence="4">
    <location>
        <begin position="140"/>
        <end position="143"/>
    </location>
</feature>
<feature type="strand" evidence="4">
    <location>
        <begin position="150"/>
        <end position="158"/>
    </location>
</feature>
<feature type="strand" evidence="4">
    <location>
        <begin position="168"/>
        <end position="174"/>
    </location>
</feature>
<feature type="turn" evidence="4">
    <location>
        <begin position="179"/>
        <end position="181"/>
    </location>
</feature>
<feature type="helix" evidence="4">
    <location>
        <begin position="190"/>
        <end position="192"/>
    </location>
</feature>
<feature type="strand" evidence="4">
    <location>
        <begin position="196"/>
        <end position="201"/>
    </location>
</feature>
<feature type="helix" evidence="4">
    <location>
        <begin position="203"/>
        <end position="207"/>
    </location>
</feature>
<feature type="strand" evidence="4">
    <location>
        <begin position="214"/>
        <end position="220"/>
    </location>
</feature>
<feature type="strand" evidence="4">
    <location>
        <begin position="228"/>
        <end position="238"/>
    </location>
</feature>
<reference key="1">
    <citation type="journal article" date="1987" name="J. Virol.">
        <title>Natural feline leukemia virus variant escapes neutralization by a monoclonal antibody via an amino acid change outside the antibody-binding epitope.</title>
        <authorList>
            <person name="Nicolaisen-Strouss K."/>
            <person name="Kumar H.P.M."/>
            <person name="Fitting T."/>
            <person name="Grant C.K."/>
            <person name="Elder J.H."/>
        </authorList>
    </citation>
    <scope>NUCLEOTIDE SEQUENCE [GENOMIC RNA]</scope>
</reference>
<dbReference type="EMBL" id="J03448">
    <property type="protein sequence ID" value="AAA43048.1"/>
    <property type="molecule type" value="Genomic_RNA"/>
</dbReference>
<dbReference type="PIR" id="A27172">
    <property type="entry name" value="VCMVLB"/>
</dbReference>
<dbReference type="PDB" id="1LCS">
    <property type="method" value="X-ray"/>
    <property type="resolution" value="2.50 A"/>
    <property type="chains" value="A/B=35-245"/>
</dbReference>
<dbReference type="PDBsum" id="1LCS"/>
<dbReference type="SMR" id="P11261"/>
<dbReference type="GlyCosmos" id="P11261">
    <property type="glycosylation" value="8 sites, No reported glycans"/>
</dbReference>
<dbReference type="EvolutionaryTrace" id="P11261"/>
<dbReference type="GO" id="GO:0020002">
    <property type="term" value="C:host cell plasma membrane"/>
    <property type="evidence" value="ECO:0007669"/>
    <property type="project" value="UniProtKB-SubCell"/>
</dbReference>
<dbReference type="GO" id="GO:0016020">
    <property type="term" value="C:membrane"/>
    <property type="evidence" value="ECO:0007669"/>
    <property type="project" value="UniProtKB-KW"/>
</dbReference>
<dbReference type="GO" id="GO:0019031">
    <property type="term" value="C:viral envelope"/>
    <property type="evidence" value="ECO:0007669"/>
    <property type="project" value="UniProtKB-KW"/>
</dbReference>
<dbReference type="GO" id="GO:0055036">
    <property type="term" value="C:virion membrane"/>
    <property type="evidence" value="ECO:0007669"/>
    <property type="project" value="UniProtKB-SubCell"/>
</dbReference>
<dbReference type="GO" id="GO:0019064">
    <property type="term" value="P:fusion of virus membrane with host plasma membrane"/>
    <property type="evidence" value="ECO:0007669"/>
    <property type="project" value="UniProtKB-KW"/>
</dbReference>
<dbReference type="GO" id="GO:0046718">
    <property type="term" value="P:symbiont entry into host cell"/>
    <property type="evidence" value="ECO:0007669"/>
    <property type="project" value="UniProtKB-KW"/>
</dbReference>
<dbReference type="GO" id="GO:0019062">
    <property type="term" value="P:virion attachment to host cell"/>
    <property type="evidence" value="ECO:0007669"/>
    <property type="project" value="UniProtKB-KW"/>
</dbReference>
<dbReference type="CDD" id="cd09851">
    <property type="entry name" value="HTLV-1-like_HR1-HR2"/>
    <property type="match status" value="1"/>
</dbReference>
<dbReference type="Gene3D" id="1.10.287.210">
    <property type="match status" value="1"/>
</dbReference>
<dbReference type="Gene3D" id="3.90.310.10">
    <property type="entry name" value="ENV polyprotein, receptor-binding domain"/>
    <property type="match status" value="1"/>
</dbReference>
<dbReference type="InterPro" id="IPR008981">
    <property type="entry name" value="FMuLV_rcpt-bd"/>
</dbReference>
<dbReference type="InterPro" id="IPR018154">
    <property type="entry name" value="TLV/ENV_coat_polyprotein"/>
</dbReference>
<dbReference type="PANTHER" id="PTHR10424:SF72">
    <property type="entry name" value="BC035947 PROTEIN-RELATED"/>
    <property type="match status" value="1"/>
</dbReference>
<dbReference type="PANTHER" id="PTHR10424">
    <property type="entry name" value="VIRAL ENVELOPE PROTEIN"/>
    <property type="match status" value="1"/>
</dbReference>
<dbReference type="Pfam" id="PF00429">
    <property type="entry name" value="TLV_coat"/>
    <property type="match status" value="1"/>
</dbReference>
<dbReference type="SUPFAM" id="SSF49830">
    <property type="entry name" value="ENV polyprotein, receptor-binding domain"/>
    <property type="match status" value="1"/>
</dbReference>
<dbReference type="SUPFAM" id="SSF58069">
    <property type="entry name" value="Virus ectodomain"/>
    <property type="match status" value="1"/>
</dbReference>
<protein>
    <recommendedName>
        <fullName>Envelope glycoprotein</fullName>
    </recommendedName>
    <alternativeName>
        <fullName>Env polyprotein</fullName>
    </alternativeName>
    <component>
        <recommendedName>
            <fullName>Surface protein</fullName>
            <shortName>SU</shortName>
        </recommendedName>
        <alternativeName>
            <fullName>Glycoprotein 70</fullName>
            <shortName>gp70</shortName>
        </alternativeName>
    </component>
    <component>
        <recommendedName>
            <fullName>Transmembrane protein</fullName>
            <shortName>TM</shortName>
        </recommendedName>
        <alternativeName>
            <fullName>Envelope protein p15E</fullName>
        </alternativeName>
    </component>
    <component>
        <recommendedName>
            <fullName>R-peptide</fullName>
        </recommendedName>
        <alternativeName>
            <fullName>p2E</fullName>
        </alternativeName>
    </component>
</protein>
<organism>
    <name type="scientific">Feline leukemia virus (strain B/lambda-B1)</name>
    <dbReference type="NCBI Taxonomy" id="103916"/>
    <lineage>
        <taxon>Viruses</taxon>
        <taxon>Riboviria</taxon>
        <taxon>Pararnavirae</taxon>
        <taxon>Artverviricota</taxon>
        <taxon>Revtraviricetes</taxon>
        <taxon>Ortervirales</taxon>
        <taxon>Retroviridae</taxon>
        <taxon>Orthoretrovirinae</taxon>
        <taxon>Gammaretrovirus</taxon>
        <taxon>Feline leukemia virus</taxon>
    </lineage>
</organism>
<proteinExistence type="evidence at protein level"/>
<keyword id="KW-0002">3D-structure</keyword>
<keyword id="KW-0165">Cleavage on pair of basic residues</keyword>
<keyword id="KW-0175">Coiled coil</keyword>
<keyword id="KW-1015">Disulfide bond</keyword>
<keyword id="KW-1169">Fusion of virus membrane with host cell membrane</keyword>
<keyword id="KW-1168">Fusion of virus membrane with host membrane</keyword>
<keyword id="KW-0325">Glycoprotein</keyword>
<keyword id="KW-1032">Host cell membrane</keyword>
<keyword id="KW-1043">Host membrane</keyword>
<keyword id="KW-0945">Host-virus interaction</keyword>
<keyword id="KW-0449">Lipoprotein</keyword>
<keyword id="KW-0472">Membrane</keyword>
<keyword id="KW-0564">Palmitate</keyword>
<keyword id="KW-0732">Signal</keyword>
<keyword id="KW-0812">Transmembrane</keyword>
<keyword id="KW-1133">Transmembrane helix</keyword>
<keyword id="KW-1161">Viral attachment to host cell</keyword>
<keyword id="KW-0261">Viral envelope protein</keyword>
<keyword id="KW-1162">Viral penetration into host cytoplasm</keyword>
<keyword id="KW-0946">Virion</keyword>
<keyword id="KW-1160">Virus entry into host cell</keyword>